<dbReference type="EC" id="2.2.1.7" evidence="1"/>
<dbReference type="EMBL" id="CP000758">
    <property type="protein sequence ID" value="ABS13278.1"/>
    <property type="molecule type" value="Genomic_DNA"/>
</dbReference>
<dbReference type="RefSeq" id="WP_012090818.1">
    <property type="nucleotide sequence ID" value="NC_009667.1"/>
</dbReference>
<dbReference type="SMR" id="A6WWC4"/>
<dbReference type="STRING" id="439375.Oant_0547"/>
<dbReference type="GeneID" id="61316717"/>
<dbReference type="KEGG" id="oan:Oant_0547"/>
<dbReference type="PATRIC" id="fig|439375.7.peg.584"/>
<dbReference type="eggNOG" id="COG1154">
    <property type="taxonomic scope" value="Bacteria"/>
</dbReference>
<dbReference type="HOGENOM" id="CLU_009227_1_4_5"/>
<dbReference type="UniPathway" id="UPA00064">
    <property type="reaction ID" value="UER00091"/>
</dbReference>
<dbReference type="Proteomes" id="UP000002301">
    <property type="component" value="Chromosome 1"/>
</dbReference>
<dbReference type="GO" id="GO:0008661">
    <property type="term" value="F:1-deoxy-D-xylulose-5-phosphate synthase activity"/>
    <property type="evidence" value="ECO:0007669"/>
    <property type="project" value="UniProtKB-UniRule"/>
</dbReference>
<dbReference type="GO" id="GO:0000287">
    <property type="term" value="F:magnesium ion binding"/>
    <property type="evidence" value="ECO:0007669"/>
    <property type="project" value="UniProtKB-UniRule"/>
</dbReference>
<dbReference type="GO" id="GO:0030976">
    <property type="term" value="F:thiamine pyrophosphate binding"/>
    <property type="evidence" value="ECO:0007669"/>
    <property type="project" value="UniProtKB-UniRule"/>
</dbReference>
<dbReference type="GO" id="GO:0052865">
    <property type="term" value="P:1-deoxy-D-xylulose 5-phosphate biosynthetic process"/>
    <property type="evidence" value="ECO:0007669"/>
    <property type="project" value="UniProtKB-UniPathway"/>
</dbReference>
<dbReference type="GO" id="GO:0019682">
    <property type="term" value="P:glyceraldehyde-3-phosphate metabolic process"/>
    <property type="evidence" value="ECO:0007669"/>
    <property type="project" value="UniProtKB-ARBA"/>
</dbReference>
<dbReference type="GO" id="GO:0016114">
    <property type="term" value="P:terpenoid biosynthetic process"/>
    <property type="evidence" value="ECO:0007669"/>
    <property type="project" value="UniProtKB-UniRule"/>
</dbReference>
<dbReference type="GO" id="GO:0009228">
    <property type="term" value="P:thiamine biosynthetic process"/>
    <property type="evidence" value="ECO:0007669"/>
    <property type="project" value="UniProtKB-UniRule"/>
</dbReference>
<dbReference type="CDD" id="cd02007">
    <property type="entry name" value="TPP_DXS"/>
    <property type="match status" value="1"/>
</dbReference>
<dbReference type="CDD" id="cd07033">
    <property type="entry name" value="TPP_PYR_DXS_TK_like"/>
    <property type="match status" value="1"/>
</dbReference>
<dbReference type="FunFam" id="3.40.50.920:FF:000002">
    <property type="entry name" value="1-deoxy-D-xylulose-5-phosphate synthase"/>
    <property type="match status" value="1"/>
</dbReference>
<dbReference type="FunFam" id="3.40.50.970:FF:000005">
    <property type="entry name" value="1-deoxy-D-xylulose-5-phosphate synthase"/>
    <property type="match status" value="1"/>
</dbReference>
<dbReference type="Gene3D" id="3.40.50.920">
    <property type="match status" value="1"/>
</dbReference>
<dbReference type="Gene3D" id="3.40.50.970">
    <property type="match status" value="2"/>
</dbReference>
<dbReference type="HAMAP" id="MF_00315">
    <property type="entry name" value="DXP_synth"/>
    <property type="match status" value="1"/>
</dbReference>
<dbReference type="InterPro" id="IPR005477">
    <property type="entry name" value="Dxylulose-5-P_synthase"/>
</dbReference>
<dbReference type="InterPro" id="IPR029061">
    <property type="entry name" value="THDP-binding"/>
</dbReference>
<dbReference type="InterPro" id="IPR009014">
    <property type="entry name" value="Transketo_C/PFOR_II"/>
</dbReference>
<dbReference type="InterPro" id="IPR005475">
    <property type="entry name" value="Transketolase-like_Pyr-bd"/>
</dbReference>
<dbReference type="InterPro" id="IPR020826">
    <property type="entry name" value="Transketolase_BS"/>
</dbReference>
<dbReference type="InterPro" id="IPR033248">
    <property type="entry name" value="Transketolase_C"/>
</dbReference>
<dbReference type="InterPro" id="IPR049557">
    <property type="entry name" value="Transketolase_CS"/>
</dbReference>
<dbReference type="NCBIfam" id="TIGR00204">
    <property type="entry name" value="dxs"/>
    <property type="match status" value="1"/>
</dbReference>
<dbReference type="NCBIfam" id="NF003933">
    <property type="entry name" value="PRK05444.2-2"/>
    <property type="match status" value="1"/>
</dbReference>
<dbReference type="PANTHER" id="PTHR43322">
    <property type="entry name" value="1-D-DEOXYXYLULOSE 5-PHOSPHATE SYNTHASE-RELATED"/>
    <property type="match status" value="1"/>
</dbReference>
<dbReference type="PANTHER" id="PTHR43322:SF5">
    <property type="entry name" value="1-DEOXY-D-XYLULOSE-5-PHOSPHATE SYNTHASE, CHLOROPLASTIC"/>
    <property type="match status" value="1"/>
</dbReference>
<dbReference type="Pfam" id="PF13292">
    <property type="entry name" value="DXP_synthase_N"/>
    <property type="match status" value="1"/>
</dbReference>
<dbReference type="Pfam" id="PF02779">
    <property type="entry name" value="Transket_pyr"/>
    <property type="match status" value="1"/>
</dbReference>
<dbReference type="Pfam" id="PF02780">
    <property type="entry name" value="Transketolase_C"/>
    <property type="match status" value="1"/>
</dbReference>
<dbReference type="SMART" id="SM00861">
    <property type="entry name" value="Transket_pyr"/>
    <property type="match status" value="1"/>
</dbReference>
<dbReference type="SUPFAM" id="SSF52518">
    <property type="entry name" value="Thiamin diphosphate-binding fold (THDP-binding)"/>
    <property type="match status" value="2"/>
</dbReference>
<dbReference type="SUPFAM" id="SSF52922">
    <property type="entry name" value="TK C-terminal domain-like"/>
    <property type="match status" value="1"/>
</dbReference>
<dbReference type="PROSITE" id="PS00801">
    <property type="entry name" value="TRANSKETOLASE_1"/>
    <property type="match status" value="1"/>
</dbReference>
<dbReference type="PROSITE" id="PS00802">
    <property type="entry name" value="TRANSKETOLASE_2"/>
    <property type="match status" value="1"/>
</dbReference>
<organism>
    <name type="scientific">Brucella anthropi (strain ATCC 49188 / DSM 6882 / CCUG 24695 / JCM 21032 / LMG 3331 / NBRC 15819 / NCTC 12168 / Alc 37)</name>
    <name type="common">Ochrobactrum anthropi</name>
    <dbReference type="NCBI Taxonomy" id="439375"/>
    <lineage>
        <taxon>Bacteria</taxon>
        <taxon>Pseudomonadati</taxon>
        <taxon>Pseudomonadota</taxon>
        <taxon>Alphaproteobacteria</taxon>
        <taxon>Hyphomicrobiales</taxon>
        <taxon>Brucellaceae</taxon>
        <taxon>Brucella/Ochrobactrum group</taxon>
        <taxon>Brucella</taxon>
    </lineage>
</organism>
<sequence>MSRPTTPLLDKAPIPEALRALPESDLPQLAQELRAELIDVVSTTGGHLGAGLGVVELTVALHHVFDTPHDRIIWDVGHQAYPHKILTGRRDRIRTLRQTGGLSGFTKRTESEYDPFGAAHSSTSISAGLGMAVASDLSGEKRNVIAVIGDGSMSAGMAYEAMNNAGALDARLIVILNDNDMSIAPPTGAMSAYLARLVSGKTYRSVREAAKQVAKKLPKFLQDKARKSEEYARAFFTGGTLFEELGFYYVGPIDGHNLDHLLPILKNVRDTQEGPVLIHVVTQKGKGYAPAEAAADKYHGVNKFDVITGKQSKPPANAPSYTKIFGTSLIEEARHDDRIVAITAAMPSGTGLDLFGEVFPQRTFDVGIAEQHAVTFAAGLASEGYKPFCAIYSTFLQRGYDQVVHDVSIQNLPVRFPIDRAGLVGADGPTHAGSFDTGFLAALPGFVVMAASDEAELRHMVRTAAEYDEGPISFRYPRGDGVGVDLPERGQLLEIGKGRIVREGTKVALLSFGTRLQECLAAADELGAAGLSTTVADARFAKPLDHDLIRRLAREHEVLVMVEEGAVGGFASHVLQFLATDGLLDRGLKVRALTLPDTYQDHGKPDAMYAEAGLDRTGIVHAVFAALGREAVAAPFSA</sequence>
<proteinExistence type="inferred from homology"/>
<keyword id="KW-0414">Isoprene biosynthesis</keyword>
<keyword id="KW-0460">Magnesium</keyword>
<keyword id="KW-0479">Metal-binding</keyword>
<keyword id="KW-1185">Reference proteome</keyword>
<keyword id="KW-0784">Thiamine biosynthesis</keyword>
<keyword id="KW-0786">Thiamine pyrophosphate</keyword>
<keyword id="KW-0808">Transferase</keyword>
<accession>A6WWC4</accession>
<feature type="chain" id="PRO_1000019052" description="1-deoxy-D-xylulose-5-phosphate synthase">
    <location>
        <begin position="1"/>
        <end position="638"/>
    </location>
</feature>
<feature type="binding site" evidence="1">
    <location>
        <position position="78"/>
    </location>
    <ligand>
        <name>thiamine diphosphate</name>
        <dbReference type="ChEBI" id="CHEBI:58937"/>
    </ligand>
</feature>
<feature type="binding site" evidence="1">
    <location>
        <begin position="119"/>
        <end position="121"/>
    </location>
    <ligand>
        <name>thiamine diphosphate</name>
        <dbReference type="ChEBI" id="CHEBI:58937"/>
    </ligand>
</feature>
<feature type="binding site" evidence="1">
    <location>
        <position position="150"/>
    </location>
    <ligand>
        <name>Mg(2+)</name>
        <dbReference type="ChEBI" id="CHEBI:18420"/>
    </ligand>
</feature>
<feature type="binding site" evidence="1">
    <location>
        <begin position="151"/>
        <end position="152"/>
    </location>
    <ligand>
        <name>thiamine diphosphate</name>
        <dbReference type="ChEBI" id="CHEBI:58937"/>
    </ligand>
</feature>
<feature type="binding site" evidence="1">
    <location>
        <position position="179"/>
    </location>
    <ligand>
        <name>Mg(2+)</name>
        <dbReference type="ChEBI" id="CHEBI:18420"/>
    </ligand>
</feature>
<feature type="binding site" evidence="1">
    <location>
        <position position="179"/>
    </location>
    <ligand>
        <name>thiamine diphosphate</name>
        <dbReference type="ChEBI" id="CHEBI:58937"/>
    </ligand>
</feature>
<feature type="binding site" evidence="1">
    <location>
        <position position="288"/>
    </location>
    <ligand>
        <name>thiamine diphosphate</name>
        <dbReference type="ChEBI" id="CHEBI:58937"/>
    </ligand>
</feature>
<feature type="binding site" evidence="1">
    <location>
        <position position="370"/>
    </location>
    <ligand>
        <name>thiamine diphosphate</name>
        <dbReference type="ChEBI" id="CHEBI:58937"/>
    </ligand>
</feature>
<name>DXS_BRUA4</name>
<comment type="function">
    <text evidence="1">Catalyzes the acyloin condensation reaction between C atoms 2 and 3 of pyruvate and glyceraldehyde 3-phosphate to yield 1-deoxy-D-xylulose-5-phosphate (DXP).</text>
</comment>
<comment type="catalytic activity">
    <reaction evidence="1">
        <text>D-glyceraldehyde 3-phosphate + pyruvate + H(+) = 1-deoxy-D-xylulose 5-phosphate + CO2</text>
        <dbReference type="Rhea" id="RHEA:12605"/>
        <dbReference type="ChEBI" id="CHEBI:15361"/>
        <dbReference type="ChEBI" id="CHEBI:15378"/>
        <dbReference type="ChEBI" id="CHEBI:16526"/>
        <dbReference type="ChEBI" id="CHEBI:57792"/>
        <dbReference type="ChEBI" id="CHEBI:59776"/>
        <dbReference type="EC" id="2.2.1.7"/>
    </reaction>
</comment>
<comment type="cofactor">
    <cofactor evidence="1">
        <name>Mg(2+)</name>
        <dbReference type="ChEBI" id="CHEBI:18420"/>
    </cofactor>
    <text evidence="1">Binds 1 Mg(2+) ion per subunit.</text>
</comment>
<comment type="cofactor">
    <cofactor evidence="1">
        <name>thiamine diphosphate</name>
        <dbReference type="ChEBI" id="CHEBI:58937"/>
    </cofactor>
    <text evidence="1">Binds 1 thiamine pyrophosphate per subunit.</text>
</comment>
<comment type="pathway">
    <text evidence="1">Metabolic intermediate biosynthesis; 1-deoxy-D-xylulose 5-phosphate biosynthesis; 1-deoxy-D-xylulose 5-phosphate from D-glyceraldehyde 3-phosphate and pyruvate: step 1/1.</text>
</comment>
<comment type="subunit">
    <text evidence="1">Homodimer.</text>
</comment>
<comment type="similarity">
    <text evidence="1">Belongs to the transketolase family. DXPS subfamily.</text>
</comment>
<gene>
    <name evidence="1" type="primary">dxs</name>
    <name type="ordered locus">Oant_0547</name>
</gene>
<reference key="1">
    <citation type="journal article" date="2011" name="J. Bacteriol.">
        <title>Genome of Ochrobactrum anthropi ATCC 49188 T, a versatile opportunistic pathogen and symbiont of several eukaryotic hosts.</title>
        <authorList>
            <person name="Chain P.S."/>
            <person name="Lang D.M."/>
            <person name="Comerci D.J."/>
            <person name="Malfatti S.A."/>
            <person name="Vergez L.M."/>
            <person name="Shin M."/>
            <person name="Ugalde R.A."/>
            <person name="Garcia E."/>
            <person name="Tolmasky M.E."/>
        </authorList>
    </citation>
    <scope>NUCLEOTIDE SEQUENCE [LARGE SCALE GENOMIC DNA]</scope>
    <source>
        <strain>ATCC 49188 / DSM 6882 / CCUG 24695 / JCM 21032 / LMG 3331 / NBRC 15819 / NCTC 12168 / Alc 37</strain>
    </source>
</reference>
<protein>
    <recommendedName>
        <fullName evidence="1">1-deoxy-D-xylulose-5-phosphate synthase</fullName>
        <ecNumber evidence="1">2.2.1.7</ecNumber>
    </recommendedName>
    <alternativeName>
        <fullName evidence="1">1-deoxyxylulose-5-phosphate synthase</fullName>
        <shortName evidence="1">DXP synthase</shortName>
        <shortName evidence="1">DXPS</shortName>
    </alternativeName>
</protein>
<evidence type="ECO:0000255" key="1">
    <source>
        <dbReference type="HAMAP-Rule" id="MF_00315"/>
    </source>
</evidence>